<protein>
    <recommendedName>
        <fullName>Alpha-galactosidase C</fullName>
        <ecNumber>3.2.1.22</ecNumber>
    </recommendedName>
    <alternativeName>
        <fullName>Melibiase C</fullName>
    </alternativeName>
</protein>
<keyword id="KW-0119">Carbohydrate metabolism</keyword>
<keyword id="KW-0325">Glycoprotein</keyword>
<keyword id="KW-0326">Glycosidase</keyword>
<keyword id="KW-0378">Hydrolase</keyword>
<keyword id="KW-0460">Magnesium</keyword>
<keyword id="KW-0520">NAD</keyword>
<keyword id="KW-0624">Polysaccharide degradation</keyword>
<keyword id="KW-1185">Reference proteome</keyword>
<keyword id="KW-0964">Secreted</keyword>
<keyword id="KW-0732">Signal</keyword>
<reference key="1">
    <citation type="journal article" date="2006" name="Proc. Natl. Acad. Sci. U.S.A.">
        <title>Development and application of a suite of polysaccharide-degrading enzymes for analyzing plant cell walls.</title>
        <authorList>
            <person name="Bauer S."/>
            <person name="Vasu P."/>
            <person name="Persson S."/>
            <person name="Mort A.J."/>
            <person name="Somerville C.R."/>
        </authorList>
    </citation>
    <scope>NUCLEOTIDE SEQUENCE [MRNA]</scope>
    <scope>FUNCTION</scope>
    <scope>BIOPHYSICOCHEMICAL PROPERTIES</scope>
    <source>
        <strain>FGSC A4 / ATCC 38163 / CBS 112.46 / NRRL 194 / M139</strain>
    </source>
</reference>
<reference key="2">
    <citation type="journal article" date="2005" name="Nature">
        <title>Sequencing of Aspergillus nidulans and comparative analysis with A. fumigatus and A. oryzae.</title>
        <authorList>
            <person name="Galagan J.E."/>
            <person name="Calvo S.E."/>
            <person name="Cuomo C."/>
            <person name="Ma L.-J."/>
            <person name="Wortman J.R."/>
            <person name="Batzoglou S."/>
            <person name="Lee S.-I."/>
            <person name="Bastuerkmen M."/>
            <person name="Spevak C.C."/>
            <person name="Clutterbuck J."/>
            <person name="Kapitonov V."/>
            <person name="Jurka J."/>
            <person name="Scazzocchio C."/>
            <person name="Farman M.L."/>
            <person name="Butler J."/>
            <person name="Purcell S."/>
            <person name="Harris S."/>
            <person name="Braus G.H."/>
            <person name="Draht O."/>
            <person name="Busch S."/>
            <person name="D'Enfert C."/>
            <person name="Bouchier C."/>
            <person name="Goldman G.H."/>
            <person name="Bell-Pedersen D."/>
            <person name="Griffiths-Jones S."/>
            <person name="Doonan J.H."/>
            <person name="Yu J."/>
            <person name="Vienken K."/>
            <person name="Pain A."/>
            <person name="Freitag M."/>
            <person name="Selker E.U."/>
            <person name="Archer D.B."/>
            <person name="Penalva M.A."/>
            <person name="Oakley B.R."/>
            <person name="Momany M."/>
            <person name="Tanaka T."/>
            <person name="Kumagai T."/>
            <person name="Asai K."/>
            <person name="Machida M."/>
            <person name="Nierman W.C."/>
            <person name="Denning D.W."/>
            <person name="Caddick M.X."/>
            <person name="Hynes M."/>
            <person name="Paoletti M."/>
            <person name="Fischer R."/>
            <person name="Miller B.L."/>
            <person name="Dyer P.S."/>
            <person name="Sachs M.S."/>
            <person name="Osmani S.A."/>
            <person name="Birren B.W."/>
        </authorList>
    </citation>
    <scope>NUCLEOTIDE SEQUENCE [LARGE SCALE GENOMIC DNA]</scope>
    <source>
        <strain>FGSC A4 / ATCC 38163 / CBS 112.46 / NRRL 194 / M139</strain>
    </source>
</reference>
<reference key="3">
    <citation type="journal article" date="2009" name="Fungal Genet. Biol.">
        <title>The 2008 update of the Aspergillus nidulans genome annotation: a community effort.</title>
        <authorList>
            <person name="Wortman J.R."/>
            <person name="Gilsenan J.M."/>
            <person name="Joardar V."/>
            <person name="Deegan J."/>
            <person name="Clutterbuck J."/>
            <person name="Andersen M.R."/>
            <person name="Archer D."/>
            <person name="Bencina M."/>
            <person name="Braus G."/>
            <person name="Coutinho P."/>
            <person name="von Dohren H."/>
            <person name="Doonan J."/>
            <person name="Driessen A.J."/>
            <person name="Durek P."/>
            <person name="Espeso E."/>
            <person name="Fekete E."/>
            <person name="Flipphi M."/>
            <person name="Estrada C.G."/>
            <person name="Geysens S."/>
            <person name="Goldman G."/>
            <person name="de Groot P.W."/>
            <person name="Hansen K."/>
            <person name="Harris S.D."/>
            <person name="Heinekamp T."/>
            <person name="Helmstaedt K."/>
            <person name="Henrissat B."/>
            <person name="Hofmann G."/>
            <person name="Homan T."/>
            <person name="Horio T."/>
            <person name="Horiuchi H."/>
            <person name="James S."/>
            <person name="Jones M."/>
            <person name="Karaffa L."/>
            <person name="Karanyi Z."/>
            <person name="Kato M."/>
            <person name="Keller N."/>
            <person name="Kelly D.E."/>
            <person name="Kiel J.A."/>
            <person name="Kim J.M."/>
            <person name="van der Klei I.J."/>
            <person name="Klis F.M."/>
            <person name="Kovalchuk A."/>
            <person name="Krasevec N."/>
            <person name="Kubicek C.P."/>
            <person name="Liu B."/>
            <person name="Maccabe A."/>
            <person name="Meyer V."/>
            <person name="Mirabito P."/>
            <person name="Miskei M."/>
            <person name="Mos M."/>
            <person name="Mullins J."/>
            <person name="Nelson D.R."/>
            <person name="Nielsen J."/>
            <person name="Oakley B.R."/>
            <person name="Osmani S.A."/>
            <person name="Pakula T."/>
            <person name="Paszewski A."/>
            <person name="Paulsen I."/>
            <person name="Pilsyk S."/>
            <person name="Pocsi I."/>
            <person name="Punt P.J."/>
            <person name="Ram A.F."/>
            <person name="Ren Q."/>
            <person name="Robellet X."/>
            <person name="Robson G."/>
            <person name="Seiboth B."/>
            <person name="van Solingen P."/>
            <person name="Specht T."/>
            <person name="Sun J."/>
            <person name="Taheri-Talesh N."/>
            <person name="Takeshita N."/>
            <person name="Ussery D."/>
            <person name="vanKuyk P.A."/>
            <person name="Visser H."/>
            <person name="van de Vondervoort P.J."/>
            <person name="de Vries R.P."/>
            <person name="Walton J."/>
            <person name="Xiang X."/>
            <person name="Xiong Y."/>
            <person name="Zeng A.P."/>
            <person name="Brandt B.W."/>
            <person name="Cornell M.J."/>
            <person name="van den Hondel C.A."/>
            <person name="Visser J."/>
            <person name="Oliver S.G."/>
            <person name="Turner G."/>
        </authorList>
    </citation>
    <scope>GENOME REANNOTATION</scope>
    <source>
        <strain>FGSC A4 / ATCC 38163 / CBS 112.46 / NRRL 194 / M139</strain>
    </source>
</reference>
<dbReference type="EC" id="3.2.1.22"/>
<dbReference type="EMBL" id="DQ490515">
    <property type="protein sequence ID" value="ABF50891.1"/>
    <property type="molecule type" value="mRNA"/>
</dbReference>
<dbReference type="EMBL" id="AACD01000140">
    <property type="protein sequence ID" value="EAA58775.1"/>
    <property type="molecule type" value="Genomic_DNA"/>
</dbReference>
<dbReference type="EMBL" id="BN001302">
    <property type="protein sequence ID" value="CBF73961.1"/>
    <property type="molecule type" value="Genomic_DNA"/>
</dbReference>
<dbReference type="RefSeq" id="XP_681407.1">
    <property type="nucleotide sequence ID" value="XM_676315.1"/>
</dbReference>
<dbReference type="SMR" id="Q5AU92"/>
<dbReference type="STRING" id="227321.Q5AU92"/>
<dbReference type="CAZy" id="GH36">
    <property type="family name" value="Glycoside Hydrolase Family 36"/>
</dbReference>
<dbReference type="GlyCosmos" id="Q5AU92">
    <property type="glycosylation" value="8 sites, No reported glycans"/>
</dbReference>
<dbReference type="EnsemblFungi" id="CBF73961">
    <property type="protein sequence ID" value="CBF73961"/>
    <property type="gene ID" value="ANIA_08138"/>
</dbReference>
<dbReference type="KEGG" id="ani:ANIA_08138"/>
<dbReference type="VEuPathDB" id="FungiDB:AN8138"/>
<dbReference type="eggNOG" id="ENOG502QWG1">
    <property type="taxonomic scope" value="Eukaryota"/>
</dbReference>
<dbReference type="HOGENOM" id="CLU_009640_2_1_1"/>
<dbReference type="InParanoid" id="Q5AU92"/>
<dbReference type="OMA" id="MSQQFHR"/>
<dbReference type="OrthoDB" id="5795902at2759"/>
<dbReference type="Proteomes" id="UP000000560">
    <property type="component" value="Chromosome II"/>
</dbReference>
<dbReference type="GO" id="GO:0005576">
    <property type="term" value="C:extracellular region"/>
    <property type="evidence" value="ECO:0007669"/>
    <property type="project" value="UniProtKB-SubCell"/>
</dbReference>
<dbReference type="GO" id="GO:0004557">
    <property type="term" value="F:alpha-galactosidase activity"/>
    <property type="evidence" value="ECO:0000314"/>
    <property type="project" value="UniProtKB"/>
</dbReference>
<dbReference type="GO" id="GO:0070085">
    <property type="term" value="P:glycosylation"/>
    <property type="evidence" value="ECO:0000314"/>
    <property type="project" value="AspGD"/>
</dbReference>
<dbReference type="GO" id="GO:0046355">
    <property type="term" value="P:mannan catabolic process"/>
    <property type="evidence" value="ECO:0000314"/>
    <property type="project" value="UniProtKB"/>
</dbReference>
<dbReference type="CDD" id="cd14791">
    <property type="entry name" value="GH36"/>
    <property type="match status" value="1"/>
</dbReference>
<dbReference type="FunFam" id="2.60.40.1180:FF:000028">
    <property type="entry name" value="Alpha-galactosidase"/>
    <property type="match status" value="1"/>
</dbReference>
<dbReference type="FunFam" id="2.70.98.60:FF:000001">
    <property type="entry name" value="Alpha-galactosidase"/>
    <property type="match status" value="1"/>
</dbReference>
<dbReference type="FunFam" id="3.20.20.70:FF:000118">
    <property type="entry name" value="Alpha-galactosidase"/>
    <property type="match status" value="1"/>
</dbReference>
<dbReference type="Gene3D" id="3.20.20.70">
    <property type="entry name" value="Aldolase class I"/>
    <property type="match status" value="1"/>
</dbReference>
<dbReference type="Gene3D" id="2.70.98.60">
    <property type="entry name" value="alpha-galactosidase from lactobacil brevis"/>
    <property type="match status" value="1"/>
</dbReference>
<dbReference type="Gene3D" id="2.60.40.1180">
    <property type="entry name" value="Golgi alpha-mannosidase II"/>
    <property type="match status" value="1"/>
</dbReference>
<dbReference type="InterPro" id="IPR013785">
    <property type="entry name" value="Aldolase_TIM"/>
</dbReference>
<dbReference type="InterPro" id="IPR038417">
    <property type="entry name" value="Alpga-gal_N_sf"/>
</dbReference>
<dbReference type="InterPro" id="IPR050985">
    <property type="entry name" value="Alpha-glycosidase_related"/>
</dbReference>
<dbReference type="InterPro" id="IPR002252">
    <property type="entry name" value="Glyco_hydro_36"/>
</dbReference>
<dbReference type="InterPro" id="IPR031705">
    <property type="entry name" value="Glyco_hydro_36_C"/>
</dbReference>
<dbReference type="InterPro" id="IPR031704">
    <property type="entry name" value="Glyco_hydro_36_N"/>
</dbReference>
<dbReference type="InterPro" id="IPR013780">
    <property type="entry name" value="Glyco_hydro_b"/>
</dbReference>
<dbReference type="InterPro" id="IPR017853">
    <property type="entry name" value="Glycoside_hydrolase_SF"/>
</dbReference>
<dbReference type="PANTHER" id="PTHR43053:SF3">
    <property type="entry name" value="ALPHA-GALACTOSIDASE C-RELATED"/>
    <property type="match status" value="1"/>
</dbReference>
<dbReference type="PANTHER" id="PTHR43053">
    <property type="entry name" value="GLYCOSIDASE FAMILY 31"/>
    <property type="match status" value="1"/>
</dbReference>
<dbReference type="Pfam" id="PF16874">
    <property type="entry name" value="Glyco_hydro_36C"/>
    <property type="match status" value="1"/>
</dbReference>
<dbReference type="Pfam" id="PF16875">
    <property type="entry name" value="Glyco_hydro_36N"/>
    <property type="match status" value="1"/>
</dbReference>
<dbReference type="Pfam" id="PF02065">
    <property type="entry name" value="Melibiase"/>
    <property type="match status" value="1"/>
</dbReference>
<dbReference type="PIRSF" id="PIRSF005536">
    <property type="entry name" value="Agal"/>
    <property type="match status" value="1"/>
</dbReference>
<dbReference type="PRINTS" id="PR00743">
    <property type="entry name" value="GLHYDRLASE36"/>
</dbReference>
<dbReference type="SUPFAM" id="SSF51445">
    <property type="entry name" value="(Trans)glycosidases"/>
    <property type="match status" value="1"/>
</dbReference>
<name>AGALC_EMENI</name>
<gene>
    <name type="primary">aglC</name>
    <name type="ORF">AN8138</name>
</gene>
<evidence type="ECO:0000250" key="1"/>
<evidence type="ECO:0000250" key="2">
    <source>
        <dbReference type="UniProtKB" id="Q9ALJ4"/>
    </source>
</evidence>
<evidence type="ECO:0000255" key="3"/>
<evidence type="ECO:0000269" key="4">
    <source>
    </source>
</evidence>
<evidence type="ECO:0000305" key="5"/>
<accession>Q5AU92</accession>
<accession>C8V6Q1</accession>
<accession>Q1HFQ9</accession>
<sequence length="750" mass="82202">MFRSTATVAAATAMGLLTATGHGSLAIAQGTTGSNAVVVDGTNFALNGASMSYVFHANSTTGDLVSDHFGATISGAIPAPKEPAVNGWVGMPGRIRREFPDQGRGDFRIPAVRIRQTAGYTVSDLQYQGHEVVDGKPALPGLPATFGEAGDVTTLVVHLYDNYSAVAADLSYSVFPEFDAVVRSVNVTNKGKGNITIENLASLSVDFPLEDLDLVSLRGDWAREANRERRRVEYGIQGFGSSTGYSSHLHNPFFALVHPSTTESQGEAWGFNLVYTGSFSAQVEKGSQGLTRALIGFNPDQLSWNLGPGETLTSPECVSVYSKDGIGGMSRKFHRLYRKHLIRSKFATSDRPPLLNSWEGVYFDFNQSSIETLAEQSAALGIRLFVMDDGWFGDKYPRTSDNAGLGDWTPNPDRFPNGLEPVVEEITNLTVNDTSAEKLRFGIWVEPEMVNPNSSLYREHPDWALHAGAYARTERRNQLVLNLALPEVQEYIIDFMTDLLNSADISYIKWDNNRGIHEAPSPSTDHEYMLGVYRVFDTLTARFPDVLWEGCASGGGRFDAGVLHYFPQIWTSDNTDGVDRVTIQFGTSLAYPPSAMGAHLSAVPNHQTGRTVPLEFRAHVAMMGGSFGLELDPATLQDDPDVPELIQMAEKVNPLVLNGDLYRLRLPEESQWPAALFVAEDGSQAVLFYFQLSPNVNHAAPWVRLQGLDPEASYTVDGDKTYTGATLMNLGLQYTFDTEYGSKVVFLERQ</sequence>
<comment type="function">
    <text evidence="4">Hydrolyzes a variety of simple alpha-D-galactoside as well as more complex molecules such as oligosaccharides and polysaccharides. Active on paranitrophenyl-alpha-galactoside, raffinose, locust bean gum and gum guar.</text>
</comment>
<comment type="catalytic activity">
    <reaction>
        <text>Hydrolysis of terminal, non-reducing alpha-D-galactose residues in alpha-D-galactosides, including galactose oligosaccharides, galactomannans and galactolipids.</text>
        <dbReference type="EC" id="3.2.1.22"/>
    </reaction>
</comment>
<comment type="cofactor">
    <cofactor evidence="1">
        <name>Mg(2+)</name>
        <dbReference type="ChEBI" id="CHEBI:18420"/>
    </cofactor>
</comment>
<comment type="cofactor">
    <cofactor evidence="1">
        <name>NAD(+)</name>
        <dbReference type="ChEBI" id="CHEBI:57540"/>
    </cofactor>
</comment>
<comment type="biophysicochemical properties">
    <phDependence>
        <text evidence="4">Optimum pH is 3.5.</text>
    </phDependence>
    <temperatureDependence>
        <text evidence="4">Optimum temperature is 52 degrees Celsius.</text>
    </temperatureDependence>
</comment>
<comment type="subunit">
    <text evidence="1">Homotetramer.</text>
</comment>
<comment type="subcellular location">
    <subcellularLocation>
        <location evidence="1">Secreted</location>
    </subcellularLocation>
</comment>
<comment type="similarity">
    <text evidence="5">Belongs to the glycosyl hydrolase 36 family.</text>
</comment>
<proteinExistence type="evidence at protein level"/>
<organism>
    <name type="scientific">Emericella nidulans (strain FGSC A4 / ATCC 38163 / CBS 112.46 / NRRL 194 / M139)</name>
    <name type="common">Aspergillus nidulans</name>
    <dbReference type="NCBI Taxonomy" id="227321"/>
    <lineage>
        <taxon>Eukaryota</taxon>
        <taxon>Fungi</taxon>
        <taxon>Dikarya</taxon>
        <taxon>Ascomycota</taxon>
        <taxon>Pezizomycotina</taxon>
        <taxon>Eurotiomycetes</taxon>
        <taxon>Eurotiomycetidae</taxon>
        <taxon>Eurotiales</taxon>
        <taxon>Aspergillaceae</taxon>
        <taxon>Aspergillus</taxon>
        <taxon>Aspergillus subgen. Nidulantes</taxon>
    </lineage>
</organism>
<feature type="signal peptide" evidence="3">
    <location>
        <begin position="1"/>
        <end position="26"/>
    </location>
</feature>
<feature type="chain" id="PRO_0000395067" description="Alpha-galactosidase C">
    <location>
        <begin position="27"/>
        <end position="750"/>
    </location>
</feature>
<feature type="active site" description="Nucleophile" evidence="2">
    <location>
        <position position="511"/>
    </location>
</feature>
<feature type="active site" description="Proton donor" evidence="2">
    <location>
        <position position="573"/>
    </location>
</feature>
<feature type="glycosylation site" description="N-linked (GlcNAc...) asparagine" evidence="3">
    <location>
        <position position="58"/>
    </location>
</feature>
<feature type="glycosylation site" description="N-linked (GlcNAc...) asparagine" evidence="3">
    <location>
        <position position="162"/>
    </location>
</feature>
<feature type="glycosylation site" description="N-linked (GlcNAc...) asparagine" evidence="3">
    <location>
        <position position="186"/>
    </location>
</feature>
<feature type="glycosylation site" description="N-linked (GlcNAc...) asparagine" evidence="3">
    <location>
        <position position="194"/>
    </location>
</feature>
<feature type="glycosylation site" description="N-linked (GlcNAc...) asparagine" evidence="3">
    <location>
        <position position="366"/>
    </location>
</feature>
<feature type="glycosylation site" description="N-linked (GlcNAc...) asparagine" evidence="3">
    <location>
        <position position="428"/>
    </location>
</feature>
<feature type="glycosylation site" description="N-linked (GlcNAc...) asparagine" evidence="3">
    <location>
        <position position="432"/>
    </location>
</feature>
<feature type="glycosylation site" description="N-linked (GlcNAc...) asparagine" evidence="3">
    <location>
        <position position="453"/>
    </location>
</feature>